<proteinExistence type="evidence at transcript level"/>
<name>EXB10_ORYSJ</name>
<organism>
    <name type="scientific">Oryza sativa subsp. japonica</name>
    <name type="common">Rice</name>
    <dbReference type="NCBI Taxonomy" id="39947"/>
    <lineage>
        <taxon>Eukaryota</taxon>
        <taxon>Viridiplantae</taxon>
        <taxon>Streptophyta</taxon>
        <taxon>Embryophyta</taxon>
        <taxon>Tracheophyta</taxon>
        <taxon>Spermatophyta</taxon>
        <taxon>Magnoliopsida</taxon>
        <taxon>Liliopsida</taxon>
        <taxon>Poales</taxon>
        <taxon>Poaceae</taxon>
        <taxon>BOP clade</taxon>
        <taxon>Oryzoideae</taxon>
        <taxon>Oryzeae</taxon>
        <taxon>Oryzinae</taxon>
        <taxon>Oryza</taxon>
        <taxon>Oryza sativa</taxon>
    </lineage>
</organism>
<comment type="function">
    <text evidence="1">May cause loosening and extension of plant cell walls by disrupting non-covalent bonding between cellulose microfibrils and matrix glucans. No enzymatic activity has been found. May be required for rapid internodal elongation in deepwater rice during submergence (By similarity).</text>
</comment>
<comment type="subcellular location">
    <subcellularLocation>
        <location evidence="1">Secreted</location>
        <location evidence="1">Cell wall</location>
    </subcellularLocation>
    <subcellularLocation>
        <location evidence="1">Membrane</location>
        <topology evidence="1">Peripheral membrane protein</topology>
    </subcellularLocation>
</comment>
<comment type="similarity">
    <text evidence="5">Belongs to the expansin family. Expansin B subfamily.</text>
</comment>
<comment type="online information" name="EXPANSIN homepage">
    <link uri="https://www.dept.psu.edu/biology/groups/expansins/index.htm"/>
</comment>
<dbReference type="EMBL" id="AF261278">
    <property type="protein sequence ID" value="AAF72991.1"/>
    <property type="molecule type" value="mRNA"/>
</dbReference>
<dbReference type="EMBL" id="AF391111">
    <property type="protein sequence ID" value="AAL24478.1"/>
    <property type="molecule type" value="Genomic_DNA"/>
</dbReference>
<dbReference type="EMBL" id="AC107224">
    <property type="protein sequence ID" value="AAN60490.1"/>
    <property type="molecule type" value="Genomic_DNA"/>
</dbReference>
<dbReference type="EMBL" id="DP000009">
    <property type="protein sequence ID" value="ABF93539.1"/>
    <property type="molecule type" value="Genomic_DNA"/>
</dbReference>
<dbReference type="EMBL" id="AP008209">
    <property type="protein sequence ID" value="BAF10602.1"/>
    <property type="molecule type" value="Genomic_DNA"/>
</dbReference>
<dbReference type="EMBL" id="AP014959">
    <property type="protein sequence ID" value="BAS81876.1"/>
    <property type="molecule type" value="Genomic_DNA"/>
</dbReference>
<dbReference type="EMBL" id="AK069853">
    <property type="protein sequence ID" value="BAG91637.1"/>
    <property type="molecule type" value="mRNA"/>
</dbReference>
<dbReference type="RefSeq" id="XP_015629905.1">
    <property type="nucleotide sequence ID" value="XM_015774419.1"/>
</dbReference>
<dbReference type="SMR" id="Q8H7T4"/>
<dbReference type="FunCoup" id="Q8H7T4">
    <property type="interactions" value="10"/>
</dbReference>
<dbReference type="STRING" id="39947.Q8H7T4"/>
<dbReference type="Allergome" id="499">
    <property type="allergen name" value="Ory s 1"/>
</dbReference>
<dbReference type="GlyCosmos" id="Q8H7T4">
    <property type="glycosylation" value="2 sites, No reported glycans"/>
</dbReference>
<dbReference type="PaxDb" id="39947-Q8H7T4"/>
<dbReference type="EnsemblPlants" id="Os03t0106800-01">
    <property type="protein sequence ID" value="Os03t0106800-01"/>
    <property type="gene ID" value="Os03g0106800"/>
</dbReference>
<dbReference type="Gramene" id="Os03t0106800-01">
    <property type="protein sequence ID" value="Os03t0106800-01"/>
    <property type="gene ID" value="Os03g0106800"/>
</dbReference>
<dbReference type="KEGG" id="dosa:Os03g0106800"/>
<dbReference type="eggNOG" id="ENOG502QRTE">
    <property type="taxonomic scope" value="Eukaryota"/>
</dbReference>
<dbReference type="HOGENOM" id="CLU_027462_1_1_1"/>
<dbReference type="InParanoid" id="Q8H7T4"/>
<dbReference type="OMA" id="NESWGAI"/>
<dbReference type="OrthoDB" id="644057at2759"/>
<dbReference type="Proteomes" id="UP000000763">
    <property type="component" value="Chromosome 3"/>
</dbReference>
<dbReference type="Proteomes" id="UP000059680">
    <property type="component" value="Chromosome 3"/>
</dbReference>
<dbReference type="GO" id="GO:0005576">
    <property type="term" value="C:extracellular region"/>
    <property type="evidence" value="ECO:0007669"/>
    <property type="project" value="UniProtKB-KW"/>
</dbReference>
<dbReference type="GO" id="GO:0016020">
    <property type="term" value="C:membrane"/>
    <property type="evidence" value="ECO:0007669"/>
    <property type="project" value="UniProtKB-SubCell"/>
</dbReference>
<dbReference type="GO" id="GO:0009828">
    <property type="term" value="P:plant-type cell wall loosening"/>
    <property type="evidence" value="ECO:0000250"/>
    <property type="project" value="UniProtKB"/>
</dbReference>
<dbReference type="GO" id="GO:0019953">
    <property type="term" value="P:sexual reproduction"/>
    <property type="evidence" value="ECO:0007669"/>
    <property type="project" value="InterPro"/>
</dbReference>
<dbReference type="CDD" id="cd22275">
    <property type="entry name" value="DPBB_EXPB_N"/>
    <property type="match status" value="1"/>
</dbReference>
<dbReference type="Gene3D" id="2.60.40.760">
    <property type="entry name" value="Expansin, cellulose-binding-like domain"/>
    <property type="match status" value="1"/>
</dbReference>
<dbReference type="Gene3D" id="2.40.40.10">
    <property type="entry name" value="RlpA-like domain"/>
    <property type="match status" value="1"/>
</dbReference>
<dbReference type="InterPro" id="IPR007118">
    <property type="entry name" value="Expan_Lol_pI"/>
</dbReference>
<dbReference type="InterPro" id="IPR007112">
    <property type="entry name" value="Expansin/allergen_DPBB_dom"/>
</dbReference>
<dbReference type="InterPro" id="IPR007117">
    <property type="entry name" value="Expansin_CBD"/>
</dbReference>
<dbReference type="InterPro" id="IPR036749">
    <property type="entry name" value="Expansin_CBD_sf"/>
</dbReference>
<dbReference type="InterPro" id="IPR005795">
    <property type="entry name" value="LolPI"/>
</dbReference>
<dbReference type="InterPro" id="IPR009009">
    <property type="entry name" value="RlpA-like_DPBB"/>
</dbReference>
<dbReference type="InterPro" id="IPR036908">
    <property type="entry name" value="RlpA-like_sf"/>
</dbReference>
<dbReference type="PANTHER" id="PTHR31692:SF21">
    <property type="entry name" value="EXPANSIN-B1"/>
    <property type="match status" value="1"/>
</dbReference>
<dbReference type="PANTHER" id="PTHR31692">
    <property type="entry name" value="EXPANSIN-B3"/>
    <property type="match status" value="1"/>
</dbReference>
<dbReference type="Pfam" id="PF03330">
    <property type="entry name" value="DPBB_1"/>
    <property type="match status" value="1"/>
</dbReference>
<dbReference type="Pfam" id="PF01357">
    <property type="entry name" value="Expansin_C"/>
    <property type="match status" value="1"/>
</dbReference>
<dbReference type="PRINTS" id="PR01225">
    <property type="entry name" value="EXPANSNFAMLY"/>
</dbReference>
<dbReference type="PRINTS" id="PR00829">
    <property type="entry name" value="LOLP1ALLERGN"/>
</dbReference>
<dbReference type="SMART" id="SM00837">
    <property type="entry name" value="DPBB_1"/>
    <property type="match status" value="1"/>
</dbReference>
<dbReference type="SUPFAM" id="SSF50685">
    <property type="entry name" value="Barwin-like endoglucanases"/>
    <property type="match status" value="1"/>
</dbReference>
<dbReference type="SUPFAM" id="SSF49590">
    <property type="entry name" value="PHL pollen allergen"/>
    <property type="match status" value="1"/>
</dbReference>
<dbReference type="PROSITE" id="PS50843">
    <property type="entry name" value="EXPANSIN_CBD"/>
    <property type="match status" value="1"/>
</dbReference>
<dbReference type="PROSITE" id="PS50842">
    <property type="entry name" value="EXPANSIN_EG45"/>
    <property type="match status" value="1"/>
</dbReference>
<reference key="1">
    <citation type="journal article" date="1997" name="Proc. Natl. Acad. Sci. U.S.A.">
        <title>Group I allergens of grass pollen as cell wall-loosening agents.</title>
        <authorList>
            <person name="Cosgrove D.J."/>
            <person name="Bedinger P.A."/>
            <person name="Durachko D.M."/>
        </authorList>
    </citation>
    <scope>NUCLEOTIDE SEQUENCE [MRNA]</scope>
    <source>
        <tissue>Panicle</tissue>
    </source>
</reference>
<reference key="2">
    <citation type="journal article" date="2001" name="Plant Physiol.">
        <title>Expression of beta-expansins is correlated with internodal elongation in deepwater rice.</title>
        <authorList>
            <person name="Lee Y."/>
            <person name="Kende H."/>
        </authorList>
    </citation>
    <scope>NUCLEOTIDE SEQUENCE [GENOMIC DNA]</scope>
</reference>
<reference key="3">
    <citation type="journal article" date="2005" name="Genome Res.">
        <title>Sequence, annotation, and analysis of synteny between rice chromosome 3 and diverged grass species.</title>
        <authorList>
            <consortium name="The rice chromosome 3 sequencing consortium"/>
            <person name="Buell C.R."/>
            <person name="Yuan Q."/>
            <person name="Ouyang S."/>
            <person name="Liu J."/>
            <person name="Zhu W."/>
            <person name="Wang A."/>
            <person name="Maiti R."/>
            <person name="Haas B."/>
            <person name="Wortman J."/>
            <person name="Pertea M."/>
            <person name="Jones K.M."/>
            <person name="Kim M."/>
            <person name="Overton L."/>
            <person name="Tsitrin T."/>
            <person name="Fadrosh D."/>
            <person name="Bera J."/>
            <person name="Weaver B."/>
            <person name="Jin S."/>
            <person name="Johri S."/>
            <person name="Reardon M."/>
            <person name="Webb K."/>
            <person name="Hill J."/>
            <person name="Moffat K."/>
            <person name="Tallon L."/>
            <person name="Van Aken S."/>
            <person name="Lewis M."/>
            <person name="Utterback T."/>
            <person name="Feldblyum T."/>
            <person name="Zismann V."/>
            <person name="Iobst S."/>
            <person name="Hsiao J."/>
            <person name="de Vazeille A.R."/>
            <person name="Salzberg S.L."/>
            <person name="White O."/>
            <person name="Fraser C.M."/>
            <person name="Yu Y."/>
            <person name="Kim H."/>
            <person name="Rambo T."/>
            <person name="Currie J."/>
            <person name="Collura K."/>
            <person name="Kernodle-Thompson S."/>
            <person name="Wei F."/>
            <person name="Kudrna K."/>
            <person name="Ammiraju J.S.S."/>
            <person name="Luo M."/>
            <person name="Goicoechea J.L."/>
            <person name="Wing R.A."/>
            <person name="Henry D."/>
            <person name="Oates R."/>
            <person name="Palmer M."/>
            <person name="Pries G."/>
            <person name="Saski C."/>
            <person name="Simmons J."/>
            <person name="Soderlund C."/>
            <person name="Nelson W."/>
            <person name="de la Bastide M."/>
            <person name="Spiegel L."/>
            <person name="Nascimento L."/>
            <person name="Huang E."/>
            <person name="Preston R."/>
            <person name="Zutavern T."/>
            <person name="Palmer L."/>
            <person name="O'Shaughnessy A."/>
            <person name="Dike S."/>
            <person name="McCombie W.R."/>
            <person name="Minx P."/>
            <person name="Cordum H."/>
            <person name="Wilson R."/>
            <person name="Jin W."/>
            <person name="Lee H.R."/>
            <person name="Jiang J."/>
            <person name="Jackson S."/>
        </authorList>
    </citation>
    <scope>NUCLEOTIDE SEQUENCE [LARGE SCALE GENOMIC DNA]</scope>
    <source>
        <strain>cv. Nipponbare</strain>
    </source>
</reference>
<reference key="4">
    <citation type="journal article" date="2005" name="Nature">
        <title>The map-based sequence of the rice genome.</title>
        <authorList>
            <consortium name="International rice genome sequencing project (IRGSP)"/>
        </authorList>
    </citation>
    <scope>NUCLEOTIDE SEQUENCE [LARGE SCALE GENOMIC DNA]</scope>
    <source>
        <strain>cv. Nipponbare</strain>
    </source>
</reference>
<reference key="5">
    <citation type="journal article" date="2008" name="Nucleic Acids Res.">
        <title>The rice annotation project database (RAP-DB): 2008 update.</title>
        <authorList>
            <consortium name="The rice annotation project (RAP)"/>
        </authorList>
    </citation>
    <scope>GENOME REANNOTATION</scope>
    <source>
        <strain>cv. Nipponbare</strain>
    </source>
</reference>
<reference key="6">
    <citation type="journal article" date="2013" name="Rice">
        <title>Improvement of the Oryza sativa Nipponbare reference genome using next generation sequence and optical map data.</title>
        <authorList>
            <person name="Kawahara Y."/>
            <person name="de la Bastide M."/>
            <person name="Hamilton J.P."/>
            <person name="Kanamori H."/>
            <person name="McCombie W.R."/>
            <person name="Ouyang S."/>
            <person name="Schwartz D.C."/>
            <person name="Tanaka T."/>
            <person name="Wu J."/>
            <person name="Zhou S."/>
            <person name="Childs K.L."/>
            <person name="Davidson R.M."/>
            <person name="Lin H."/>
            <person name="Quesada-Ocampo L."/>
            <person name="Vaillancourt B."/>
            <person name="Sakai H."/>
            <person name="Lee S.S."/>
            <person name="Kim J."/>
            <person name="Numa H."/>
            <person name="Itoh T."/>
            <person name="Buell C.R."/>
            <person name="Matsumoto T."/>
        </authorList>
    </citation>
    <scope>GENOME REANNOTATION</scope>
    <source>
        <strain>cv. Nipponbare</strain>
    </source>
</reference>
<reference key="7">
    <citation type="journal article" date="2003" name="Science">
        <title>Collection, mapping, and annotation of over 28,000 cDNA clones from japonica rice.</title>
        <authorList>
            <consortium name="The rice full-length cDNA consortium"/>
        </authorList>
    </citation>
    <scope>NUCLEOTIDE SEQUENCE [LARGE SCALE MRNA]</scope>
    <source>
        <strain>cv. Nipponbare</strain>
    </source>
</reference>
<reference key="8">
    <citation type="journal article" date="2004" name="Plant Mol. Biol.">
        <title>Nomenclature for members of the expansin superfamily of genes and proteins.</title>
        <authorList>
            <person name="Kende H."/>
            <person name="Bradford K.J."/>
            <person name="Brummell D.A."/>
            <person name="Cho H.-T."/>
            <person name="Cosgrove D.J."/>
            <person name="Fleming A.J."/>
            <person name="Gehring C."/>
            <person name="Lee Y."/>
            <person name="McQueen-Mason S.J."/>
            <person name="Rose J.K.C."/>
            <person name="Voesenek L.A.C."/>
        </authorList>
    </citation>
    <scope>NOMENCLATURE</scope>
</reference>
<gene>
    <name type="primary">EXPB10</name>
    <name type="ordered locus">Os03g0106800</name>
    <name type="ordered locus">LOC_Os03g01640</name>
    <name type="ORF">OSJNBa0009C08.18</name>
</gene>
<keyword id="KW-0134">Cell wall</keyword>
<keyword id="KW-0961">Cell wall biogenesis/degradation</keyword>
<keyword id="KW-1015">Disulfide bond</keyword>
<keyword id="KW-0325">Glycoprotein</keyword>
<keyword id="KW-0472">Membrane</keyword>
<keyword id="KW-1185">Reference proteome</keyword>
<keyword id="KW-0964">Secreted</keyword>
<keyword id="KW-0732">Signal</keyword>
<evidence type="ECO:0000250" key="1"/>
<evidence type="ECO:0000255" key="2"/>
<evidence type="ECO:0000255" key="3">
    <source>
        <dbReference type="PROSITE-ProRule" id="PRU00078"/>
    </source>
</evidence>
<evidence type="ECO:0000255" key="4">
    <source>
        <dbReference type="PROSITE-ProRule" id="PRU00079"/>
    </source>
</evidence>
<evidence type="ECO:0000305" key="5"/>
<feature type="signal peptide" evidence="2">
    <location>
        <begin position="1"/>
        <end position="22"/>
    </location>
</feature>
<feature type="chain" id="PRO_0000252021" description="Expansin-B10">
    <location>
        <begin position="23"/>
        <end position="267"/>
    </location>
</feature>
<feature type="domain" description="Expansin-like EG45" evidence="4">
    <location>
        <begin position="61"/>
        <end position="167"/>
    </location>
</feature>
<feature type="domain" description="Expansin-like CBD" evidence="3">
    <location>
        <begin position="181"/>
        <end position="262"/>
    </location>
</feature>
<feature type="glycosylation site" description="N-linked (GlcNAc...) asparagine" evidence="2">
    <location>
        <position position="32"/>
    </location>
</feature>
<feature type="glycosylation site" description="N-linked (GlcNAc...) asparagine" evidence="2">
    <location>
        <position position="213"/>
    </location>
</feature>
<feature type="disulfide bond" evidence="4">
    <location>
        <begin position="64"/>
        <end position="92"/>
    </location>
</feature>
<feature type="disulfide bond" evidence="4">
    <location>
        <begin position="95"/>
        <end position="162"/>
    </location>
</feature>
<feature type="disulfide bond" evidence="4">
    <location>
        <begin position="100"/>
        <end position="106"/>
    </location>
</feature>
<accession>Q8H7T4</accession>
<accession>Q0DVY6</accession>
<accession>Q9LD05</accession>
<protein>
    <recommendedName>
        <fullName>Expansin-B10</fullName>
    </recommendedName>
    <alternativeName>
        <fullName>Beta-expansin-10</fullName>
    </alternativeName>
    <alternativeName>
        <fullName>OsEXPB10</fullName>
    </alternativeName>
    <alternativeName>
        <fullName>OsaEXPb1.5</fullName>
    </alternativeName>
</protein>
<sequence>MASSCLLLACVVAAAMVSAVSCGPPKVPPGPNITAAYGKQWLEARGTWYGKPKGAGPDDNGGACGYKDIDKAPFLGMNSCGNDPIFKDGKGCGSCFEVKCSKPEACSDKPVIIHITDMNTEPIAAYHFDLSGHAFGAMAKEGKDEELRKAGIIDMQFRRVRCKYPGETKVTFHVEKGSNPNYFAVLVKYVGGDGDVVKVELKEKGSEEWKPLNESWGAIWRIDTPKPLKGPFSLRVTTESDQKLVANDVIPDNWKANALYKSEIQVD</sequence>